<protein>
    <recommendedName>
        <fullName evidence="1">Large ribosomal subunit protein bL33</fullName>
    </recommendedName>
    <alternativeName>
        <fullName evidence="3">50S ribosomal protein L33</fullName>
    </alternativeName>
</protein>
<keyword id="KW-1185">Reference proteome</keyword>
<keyword id="KW-0687">Ribonucleoprotein</keyword>
<keyword id="KW-0689">Ribosomal protein</keyword>
<accession>Q1H4K5</accession>
<evidence type="ECO:0000255" key="1">
    <source>
        <dbReference type="HAMAP-Rule" id="MF_00294"/>
    </source>
</evidence>
<evidence type="ECO:0000256" key="2">
    <source>
        <dbReference type="SAM" id="MobiDB-lite"/>
    </source>
</evidence>
<evidence type="ECO:0000305" key="3"/>
<dbReference type="EMBL" id="CP000284">
    <property type="protein sequence ID" value="ABE48582.1"/>
    <property type="molecule type" value="Genomic_DNA"/>
</dbReference>
<dbReference type="RefSeq" id="WP_011478679.1">
    <property type="nucleotide sequence ID" value="NC_007947.1"/>
</dbReference>
<dbReference type="SMR" id="Q1H4K5"/>
<dbReference type="STRING" id="265072.Mfla_0311"/>
<dbReference type="KEGG" id="mfa:Mfla_0311"/>
<dbReference type="eggNOG" id="COG0267">
    <property type="taxonomic scope" value="Bacteria"/>
</dbReference>
<dbReference type="HOGENOM" id="CLU_190949_1_1_4"/>
<dbReference type="OrthoDB" id="21586at2"/>
<dbReference type="Proteomes" id="UP000002440">
    <property type="component" value="Chromosome"/>
</dbReference>
<dbReference type="GO" id="GO:0022625">
    <property type="term" value="C:cytosolic large ribosomal subunit"/>
    <property type="evidence" value="ECO:0007669"/>
    <property type="project" value="TreeGrafter"/>
</dbReference>
<dbReference type="GO" id="GO:0003735">
    <property type="term" value="F:structural constituent of ribosome"/>
    <property type="evidence" value="ECO:0007669"/>
    <property type="project" value="InterPro"/>
</dbReference>
<dbReference type="GO" id="GO:0006412">
    <property type="term" value="P:translation"/>
    <property type="evidence" value="ECO:0007669"/>
    <property type="project" value="UniProtKB-UniRule"/>
</dbReference>
<dbReference type="FunFam" id="2.20.28.120:FF:000001">
    <property type="entry name" value="50S ribosomal protein L33"/>
    <property type="match status" value="1"/>
</dbReference>
<dbReference type="Gene3D" id="2.20.28.120">
    <property type="entry name" value="Ribosomal protein L33"/>
    <property type="match status" value="1"/>
</dbReference>
<dbReference type="HAMAP" id="MF_00294">
    <property type="entry name" value="Ribosomal_bL33"/>
    <property type="match status" value="1"/>
</dbReference>
<dbReference type="InterPro" id="IPR001705">
    <property type="entry name" value="Ribosomal_bL33"/>
</dbReference>
<dbReference type="InterPro" id="IPR018264">
    <property type="entry name" value="Ribosomal_bL33_CS"/>
</dbReference>
<dbReference type="InterPro" id="IPR038584">
    <property type="entry name" value="Ribosomal_bL33_sf"/>
</dbReference>
<dbReference type="InterPro" id="IPR011332">
    <property type="entry name" value="Ribosomal_zn-bd"/>
</dbReference>
<dbReference type="NCBIfam" id="NF001764">
    <property type="entry name" value="PRK00504.1"/>
    <property type="match status" value="1"/>
</dbReference>
<dbReference type="NCBIfam" id="NF001860">
    <property type="entry name" value="PRK00595.1"/>
    <property type="match status" value="1"/>
</dbReference>
<dbReference type="NCBIfam" id="TIGR01023">
    <property type="entry name" value="rpmG_bact"/>
    <property type="match status" value="1"/>
</dbReference>
<dbReference type="PANTHER" id="PTHR15238">
    <property type="entry name" value="54S RIBOSOMAL PROTEIN L39, MITOCHONDRIAL"/>
    <property type="match status" value="1"/>
</dbReference>
<dbReference type="PANTHER" id="PTHR15238:SF1">
    <property type="entry name" value="LARGE RIBOSOMAL SUBUNIT PROTEIN BL33M"/>
    <property type="match status" value="1"/>
</dbReference>
<dbReference type="Pfam" id="PF00471">
    <property type="entry name" value="Ribosomal_L33"/>
    <property type="match status" value="1"/>
</dbReference>
<dbReference type="SUPFAM" id="SSF57829">
    <property type="entry name" value="Zn-binding ribosomal proteins"/>
    <property type="match status" value="1"/>
</dbReference>
<dbReference type="PROSITE" id="PS00582">
    <property type="entry name" value="RIBOSOMAL_L33"/>
    <property type="match status" value="1"/>
</dbReference>
<reference key="1">
    <citation type="submission" date="2006-03" db="EMBL/GenBank/DDBJ databases">
        <title>Complete sequence of Methylobacillus flagellatus KT.</title>
        <authorList>
            <consortium name="US DOE Joint Genome Institute"/>
            <person name="Copeland A."/>
            <person name="Lucas S."/>
            <person name="Lapidus A."/>
            <person name="Barry K."/>
            <person name="Detter J.C."/>
            <person name="Glavina del Rio T."/>
            <person name="Hammon N."/>
            <person name="Israni S."/>
            <person name="Dalin E."/>
            <person name="Tice H."/>
            <person name="Pitluck S."/>
            <person name="Brettin T."/>
            <person name="Bruce D."/>
            <person name="Han C."/>
            <person name="Tapia R."/>
            <person name="Saunders E."/>
            <person name="Gilna P."/>
            <person name="Schmutz J."/>
            <person name="Larimer F."/>
            <person name="Land M."/>
            <person name="Kyrpides N."/>
            <person name="Anderson I."/>
            <person name="Richardson P."/>
        </authorList>
    </citation>
    <scope>NUCLEOTIDE SEQUENCE [LARGE SCALE GENOMIC DNA]</scope>
    <source>
        <strain>ATCC 51484 / DSM 6875 / VKM B-1610 / KT</strain>
    </source>
</reference>
<feature type="chain" id="PRO_0000356540" description="Large ribosomal subunit protein bL33">
    <location>
        <begin position="1"/>
        <end position="51"/>
    </location>
</feature>
<feature type="region of interest" description="Disordered" evidence="2">
    <location>
        <begin position="1"/>
        <end position="23"/>
    </location>
</feature>
<feature type="compositionally biased region" description="Polar residues" evidence="2">
    <location>
        <begin position="10"/>
        <end position="20"/>
    </location>
</feature>
<proteinExistence type="inferred from homology"/>
<name>RL33_METFK</name>
<gene>
    <name evidence="1" type="primary">rpmG</name>
    <name type="ordered locus">Mfla_0311</name>
</gene>
<sequence>MREKIKLESSAGTGHFYTTTKNKRTMPEKMEIKKFDPVARKHVLYKETKLK</sequence>
<comment type="similarity">
    <text evidence="1">Belongs to the bacterial ribosomal protein bL33 family.</text>
</comment>
<organism>
    <name type="scientific">Methylobacillus flagellatus (strain ATCC 51484 / DSM 6875 / VKM B-1610 / KT)</name>
    <dbReference type="NCBI Taxonomy" id="265072"/>
    <lineage>
        <taxon>Bacteria</taxon>
        <taxon>Pseudomonadati</taxon>
        <taxon>Pseudomonadota</taxon>
        <taxon>Betaproteobacteria</taxon>
        <taxon>Nitrosomonadales</taxon>
        <taxon>Methylophilaceae</taxon>
        <taxon>Methylobacillus</taxon>
    </lineage>
</organism>